<accession>Q7V9W3</accession>
<reference key="1">
    <citation type="journal article" date="2003" name="Proc. Natl. Acad. Sci. U.S.A.">
        <title>Genome sequence of the cyanobacterium Prochlorococcus marinus SS120, a nearly minimal oxyphototrophic genome.</title>
        <authorList>
            <person name="Dufresne A."/>
            <person name="Salanoubat M."/>
            <person name="Partensky F."/>
            <person name="Artiguenave F."/>
            <person name="Axmann I.M."/>
            <person name="Barbe V."/>
            <person name="Duprat S."/>
            <person name="Galperin M.Y."/>
            <person name="Koonin E.V."/>
            <person name="Le Gall F."/>
            <person name="Makarova K.S."/>
            <person name="Ostrowski M."/>
            <person name="Oztas S."/>
            <person name="Robert C."/>
            <person name="Rogozin I.B."/>
            <person name="Scanlan D.J."/>
            <person name="Tandeau de Marsac N."/>
            <person name="Weissenbach J."/>
            <person name="Wincker P."/>
            <person name="Wolf Y.I."/>
            <person name="Hess W.R."/>
        </authorList>
    </citation>
    <scope>NUCLEOTIDE SEQUENCE [LARGE SCALE GENOMIC DNA]</scope>
    <source>
        <strain>SARG / CCMP1375 / SS120</strain>
    </source>
</reference>
<gene>
    <name evidence="1" type="primary">rplD</name>
    <name evidence="1" type="synonym">rpl4</name>
    <name type="ordered locus">Pro_1711</name>
</gene>
<organism>
    <name type="scientific">Prochlorococcus marinus (strain SARG / CCMP1375 / SS120)</name>
    <dbReference type="NCBI Taxonomy" id="167539"/>
    <lineage>
        <taxon>Bacteria</taxon>
        <taxon>Bacillati</taxon>
        <taxon>Cyanobacteriota</taxon>
        <taxon>Cyanophyceae</taxon>
        <taxon>Synechococcales</taxon>
        <taxon>Prochlorococcaceae</taxon>
        <taxon>Prochlorococcus</taxon>
    </lineage>
</organism>
<evidence type="ECO:0000255" key="1">
    <source>
        <dbReference type="HAMAP-Rule" id="MF_01328"/>
    </source>
</evidence>
<evidence type="ECO:0000256" key="2">
    <source>
        <dbReference type="SAM" id="MobiDB-lite"/>
    </source>
</evidence>
<evidence type="ECO:0000305" key="3"/>
<protein>
    <recommendedName>
        <fullName evidence="1">Large ribosomal subunit protein uL4</fullName>
    </recommendedName>
    <alternativeName>
        <fullName evidence="3">50S ribosomal protein L4</fullName>
    </alternativeName>
</protein>
<keyword id="KW-1185">Reference proteome</keyword>
<keyword id="KW-0687">Ribonucleoprotein</keyword>
<keyword id="KW-0689">Ribosomal protein</keyword>
<keyword id="KW-0694">RNA-binding</keyword>
<keyword id="KW-0699">rRNA-binding</keyword>
<dbReference type="EMBL" id="AE017126">
    <property type="protein sequence ID" value="AAQ00755.1"/>
    <property type="molecule type" value="Genomic_DNA"/>
</dbReference>
<dbReference type="RefSeq" id="NP_876102.1">
    <property type="nucleotide sequence ID" value="NC_005042.1"/>
</dbReference>
<dbReference type="RefSeq" id="WP_011125860.1">
    <property type="nucleotide sequence ID" value="NC_005042.1"/>
</dbReference>
<dbReference type="SMR" id="Q7V9W3"/>
<dbReference type="STRING" id="167539.Pro_1711"/>
<dbReference type="EnsemblBacteria" id="AAQ00755">
    <property type="protein sequence ID" value="AAQ00755"/>
    <property type="gene ID" value="Pro_1711"/>
</dbReference>
<dbReference type="KEGG" id="pma:Pro_1711"/>
<dbReference type="PATRIC" id="fig|167539.5.peg.1806"/>
<dbReference type="eggNOG" id="COG0088">
    <property type="taxonomic scope" value="Bacteria"/>
</dbReference>
<dbReference type="HOGENOM" id="CLU_041575_5_2_3"/>
<dbReference type="OrthoDB" id="9803201at2"/>
<dbReference type="Proteomes" id="UP000001420">
    <property type="component" value="Chromosome"/>
</dbReference>
<dbReference type="GO" id="GO:1990904">
    <property type="term" value="C:ribonucleoprotein complex"/>
    <property type="evidence" value="ECO:0007669"/>
    <property type="project" value="UniProtKB-KW"/>
</dbReference>
<dbReference type="GO" id="GO:0005840">
    <property type="term" value="C:ribosome"/>
    <property type="evidence" value="ECO:0007669"/>
    <property type="project" value="UniProtKB-KW"/>
</dbReference>
<dbReference type="GO" id="GO:0019843">
    <property type="term" value="F:rRNA binding"/>
    <property type="evidence" value="ECO:0007669"/>
    <property type="project" value="UniProtKB-UniRule"/>
</dbReference>
<dbReference type="GO" id="GO:0003735">
    <property type="term" value="F:structural constituent of ribosome"/>
    <property type="evidence" value="ECO:0007669"/>
    <property type="project" value="InterPro"/>
</dbReference>
<dbReference type="GO" id="GO:0006412">
    <property type="term" value="P:translation"/>
    <property type="evidence" value="ECO:0007669"/>
    <property type="project" value="UniProtKB-UniRule"/>
</dbReference>
<dbReference type="Gene3D" id="3.40.1370.10">
    <property type="match status" value="1"/>
</dbReference>
<dbReference type="HAMAP" id="MF_01328_B">
    <property type="entry name" value="Ribosomal_uL4_B"/>
    <property type="match status" value="1"/>
</dbReference>
<dbReference type="InterPro" id="IPR002136">
    <property type="entry name" value="Ribosomal_uL4"/>
</dbReference>
<dbReference type="InterPro" id="IPR013005">
    <property type="entry name" value="Ribosomal_uL4-like"/>
</dbReference>
<dbReference type="InterPro" id="IPR023574">
    <property type="entry name" value="Ribosomal_uL4_dom_sf"/>
</dbReference>
<dbReference type="NCBIfam" id="TIGR03953">
    <property type="entry name" value="rplD_bact"/>
    <property type="match status" value="1"/>
</dbReference>
<dbReference type="PANTHER" id="PTHR10746">
    <property type="entry name" value="50S RIBOSOMAL PROTEIN L4"/>
    <property type="match status" value="1"/>
</dbReference>
<dbReference type="PANTHER" id="PTHR10746:SF17">
    <property type="entry name" value="LARGE RIBOSOMAL SUBUNIT PROTEIN UL4C"/>
    <property type="match status" value="1"/>
</dbReference>
<dbReference type="Pfam" id="PF00573">
    <property type="entry name" value="Ribosomal_L4"/>
    <property type="match status" value="1"/>
</dbReference>
<dbReference type="SUPFAM" id="SSF52166">
    <property type="entry name" value="Ribosomal protein L4"/>
    <property type="match status" value="1"/>
</dbReference>
<proteinExistence type="inferred from homology"/>
<name>RL4_PROMA</name>
<sequence length="211" mass="23297">MANCAVLDWQGKEAGKASLNLKVAKDSSAVDLMHRAVLRQQAHSRQGTASTLTRAEVRGGGRKPYKQKGTGRARQGSIRTPLRPGGGIIFGPKPRQYNLSMNRKERRLALRTALMARFNDVIAVKDFGSKLKVPKTKEIQDFLARLDISSNSKVLIILSQPSDIIRRSVRNLEKVKLIAAEHLNVFDLLNANSLIIGEDALGKIKEVYGDD</sequence>
<feature type="chain" id="PRO_0000129256" description="Large ribosomal subunit protein uL4">
    <location>
        <begin position="1"/>
        <end position="211"/>
    </location>
</feature>
<feature type="region of interest" description="Disordered" evidence="2">
    <location>
        <begin position="41"/>
        <end position="85"/>
    </location>
</feature>
<feature type="compositionally biased region" description="Polar residues" evidence="2">
    <location>
        <begin position="41"/>
        <end position="53"/>
    </location>
</feature>
<feature type="compositionally biased region" description="Basic residues" evidence="2">
    <location>
        <begin position="60"/>
        <end position="71"/>
    </location>
</feature>
<comment type="function">
    <text evidence="1">One of the primary rRNA binding proteins, this protein initially binds near the 5'-end of the 23S rRNA. It is important during the early stages of 50S assembly. It makes multiple contacts with different domains of the 23S rRNA in the assembled 50S subunit and ribosome.</text>
</comment>
<comment type="function">
    <text evidence="1">Forms part of the polypeptide exit tunnel.</text>
</comment>
<comment type="subunit">
    <text evidence="1">Part of the 50S ribosomal subunit.</text>
</comment>
<comment type="similarity">
    <text evidence="1">Belongs to the universal ribosomal protein uL4 family.</text>
</comment>